<name>CITD_LATSS</name>
<organism>
    <name type="scientific">Latilactobacillus sakei subsp. sakei (strain 23K)</name>
    <name type="common">Lactobacillus sakei subsp. sakei</name>
    <dbReference type="NCBI Taxonomy" id="314315"/>
    <lineage>
        <taxon>Bacteria</taxon>
        <taxon>Bacillati</taxon>
        <taxon>Bacillota</taxon>
        <taxon>Bacilli</taxon>
        <taxon>Lactobacillales</taxon>
        <taxon>Lactobacillaceae</taxon>
        <taxon>Latilactobacillus</taxon>
    </lineage>
</organism>
<sequence>MELKQIATAGTMESSDIMITLSPNKTGLEIKLQSNVEKQFGQQIRTMIESVLKQFEITNVTVDAVDKGALDCTIKARTIVAVYRGLGKEDYDWEEINKWIA</sequence>
<protein>
    <recommendedName>
        <fullName evidence="1">Citrate lyase acyl carrier protein</fullName>
    </recommendedName>
    <alternativeName>
        <fullName evidence="1">Citrate lyase gamma chain</fullName>
    </alternativeName>
</protein>
<dbReference type="EMBL" id="CR936503">
    <property type="protein sequence ID" value="CAI55530.1"/>
    <property type="molecule type" value="Genomic_DNA"/>
</dbReference>
<dbReference type="RefSeq" id="WP_011374923.1">
    <property type="nucleotide sequence ID" value="NC_007576.1"/>
</dbReference>
<dbReference type="SMR" id="Q38WA3"/>
<dbReference type="STRING" id="314315.LCA_1226"/>
<dbReference type="KEGG" id="lsa:LCA_1226"/>
<dbReference type="eggNOG" id="COG3052">
    <property type="taxonomic scope" value="Bacteria"/>
</dbReference>
<dbReference type="HOGENOM" id="CLU_158489_0_0_9"/>
<dbReference type="OrthoDB" id="1120942at2"/>
<dbReference type="Proteomes" id="UP000002707">
    <property type="component" value="Chromosome"/>
</dbReference>
<dbReference type="GO" id="GO:0005737">
    <property type="term" value="C:cytoplasm"/>
    <property type="evidence" value="ECO:0007669"/>
    <property type="project" value="UniProtKB-SubCell"/>
</dbReference>
<dbReference type="HAMAP" id="MF_00805">
    <property type="entry name" value="CitD"/>
    <property type="match status" value="1"/>
</dbReference>
<dbReference type="InterPro" id="IPR006495">
    <property type="entry name" value="CitD"/>
</dbReference>
<dbReference type="InterPro" id="IPR023439">
    <property type="entry name" value="Mal_deCO2ase/Cit_lyase_ACP"/>
</dbReference>
<dbReference type="NCBIfam" id="TIGR01608">
    <property type="entry name" value="citD"/>
    <property type="match status" value="1"/>
</dbReference>
<dbReference type="NCBIfam" id="NF009726">
    <property type="entry name" value="PRK13253.1"/>
    <property type="match status" value="1"/>
</dbReference>
<dbReference type="Pfam" id="PF06857">
    <property type="entry name" value="ACP"/>
    <property type="match status" value="1"/>
</dbReference>
<dbReference type="PIRSF" id="PIRSF002736">
    <property type="entry name" value="Citrt_lyas_gamma"/>
    <property type="match status" value="1"/>
</dbReference>
<feature type="chain" id="PRO_1000047075" description="Citrate lyase acyl carrier protein">
    <location>
        <begin position="1"/>
        <end position="101"/>
    </location>
</feature>
<feature type="modified residue" description="O-(phosphoribosyl dephospho-coenzyme A)serine" evidence="1">
    <location>
        <position position="14"/>
    </location>
</feature>
<gene>
    <name evidence="1" type="primary">citD</name>
    <name type="ordered locus">LCA_1226</name>
</gene>
<accession>Q38WA3</accession>
<comment type="function">
    <text evidence="1">Covalent carrier of the coenzyme of citrate lyase.</text>
</comment>
<comment type="subunit">
    <text evidence="1">Oligomer with a subunit composition of (alpha,beta,gamma)6.</text>
</comment>
<comment type="subcellular location">
    <subcellularLocation>
        <location evidence="1">Cytoplasm</location>
    </subcellularLocation>
</comment>
<comment type="similarity">
    <text evidence="1">Belongs to the CitD family.</text>
</comment>
<keyword id="KW-0963">Cytoplasm</keyword>
<keyword id="KW-0597">Phosphoprotein</keyword>
<keyword id="KW-1185">Reference proteome</keyword>
<evidence type="ECO:0000255" key="1">
    <source>
        <dbReference type="HAMAP-Rule" id="MF_00805"/>
    </source>
</evidence>
<proteinExistence type="inferred from homology"/>
<reference key="1">
    <citation type="journal article" date="2005" name="Nat. Biotechnol.">
        <title>The complete genome sequence of the meat-borne lactic acid bacterium Lactobacillus sakei 23K.</title>
        <authorList>
            <person name="Chaillou S."/>
            <person name="Champomier-Verges M.-C."/>
            <person name="Cornet M."/>
            <person name="Crutz-Le Coq A.-M."/>
            <person name="Dudez A.-M."/>
            <person name="Martin V."/>
            <person name="Beaufils S."/>
            <person name="Darbon-Rongere E."/>
            <person name="Bossy R."/>
            <person name="Loux V."/>
            <person name="Zagorec M."/>
        </authorList>
    </citation>
    <scope>NUCLEOTIDE SEQUENCE [LARGE SCALE GENOMIC DNA]</scope>
    <source>
        <strain>23K</strain>
    </source>
</reference>